<proteinExistence type="inferred from homology"/>
<dbReference type="EMBL" id="CP000733">
    <property type="protein sequence ID" value="ABS76505.1"/>
    <property type="molecule type" value="Genomic_DNA"/>
</dbReference>
<dbReference type="RefSeq" id="WP_005770880.1">
    <property type="nucleotide sequence ID" value="NC_009727.1"/>
</dbReference>
<dbReference type="SMR" id="A9KG87"/>
<dbReference type="KEGG" id="cbd:CBUD_1377"/>
<dbReference type="HOGENOM" id="CLU_017633_0_7_6"/>
<dbReference type="Proteomes" id="UP000008555">
    <property type="component" value="Chromosome"/>
</dbReference>
<dbReference type="GO" id="GO:0005737">
    <property type="term" value="C:cytoplasm"/>
    <property type="evidence" value="ECO:0007669"/>
    <property type="project" value="UniProtKB-SubCell"/>
</dbReference>
<dbReference type="GO" id="GO:0005524">
    <property type="term" value="F:ATP binding"/>
    <property type="evidence" value="ECO:0007669"/>
    <property type="project" value="InterPro"/>
</dbReference>
<dbReference type="GO" id="GO:0031072">
    <property type="term" value="F:heat shock protein binding"/>
    <property type="evidence" value="ECO:0007669"/>
    <property type="project" value="InterPro"/>
</dbReference>
<dbReference type="GO" id="GO:0051082">
    <property type="term" value="F:unfolded protein binding"/>
    <property type="evidence" value="ECO:0007669"/>
    <property type="project" value="UniProtKB-UniRule"/>
</dbReference>
<dbReference type="GO" id="GO:0008270">
    <property type="term" value="F:zinc ion binding"/>
    <property type="evidence" value="ECO:0007669"/>
    <property type="project" value="UniProtKB-UniRule"/>
</dbReference>
<dbReference type="GO" id="GO:0051085">
    <property type="term" value="P:chaperone cofactor-dependent protein refolding"/>
    <property type="evidence" value="ECO:0007669"/>
    <property type="project" value="TreeGrafter"/>
</dbReference>
<dbReference type="GO" id="GO:0006260">
    <property type="term" value="P:DNA replication"/>
    <property type="evidence" value="ECO:0007669"/>
    <property type="project" value="UniProtKB-KW"/>
</dbReference>
<dbReference type="GO" id="GO:0042026">
    <property type="term" value="P:protein refolding"/>
    <property type="evidence" value="ECO:0007669"/>
    <property type="project" value="TreeGrafter"/>
</dbReference>
<dbReference type="GO" id="GO:0009408">
    <property type="term" value="P:response to heat"/>
    <property type="evidence" value="ECO:0007669"/>
    <property type="project" value="InterPro"/>
</dbReference>
<dbReference type="CDD" id="cd06257">
    <property type="entry name" value="DnaJ"/>
    <property type="match status" value="1"/>
</dbReference>
<dbReference type="CDD" id="cd10747">
    <property type="entry name" value="DnaJ_C"/>
    <property type="match status" value="1"/>
</dbReference>
<dbReference type="CDD" id="cd10719">
    <property type="entry name" value="DnaJ_zf"/>
    <property type="match status" value="1"/>
</dbReference>
<dbReference type="FunFam" id="1.10.287.110:FF:000160">
    <property type="entry name" value="Chaperone protein DnaJ"/>
    <property type="match status" value="1"/>
</dbReference>
<dbReference type="FunFam" id="2.10.230.10:FF:000002">
    <property type="entry name" value="Molecular chaperone DnaJ"/>
    <property type="match status" value="1"/>
</dbReference>
<dbReference type="FunFam" id="2.60.260.20:FF:000004">
    <property type="entry name" value="Molecular chaperone DnaJ"/>
    <property type="match status" value="1"/>
</dbReference>
<dbReference type="Gene3D" id="1.10.287.110">
    <property type="entry name" value="DnaJ domain"/>
    <property type="match status" value="1"/>
</dbReference>
<dbReference type="Gene3D" id="2.10.230.10">
    <property type="entry name" value="Heat shock protein DnaJ, cysteine-rich domain"/>
    <property type="match status" value="1"/>
</dbReference>
<dbReference type="Gene3D" id="2.60.260.20">
    <property type="entry name" value="Urease metallochaperone UreE, N-terminal domain"/>
    <property type="match status" value="2"/>
</dbReference>
<dbReference type="HAMAP" id="MF_01152">
    <property type="entry name" value="DnaJ"/>
    <property type="match status" value="1"/>
</dbReference>
<dbReference type="InterPro" id="IPR012724">
    <property type="entry name" value="DnaJ"/>
</dbReference>
<dbReference type="InterPro" id="IPR002939">
    <property type="entry name" value="DnaJ_C"/>
</dbReference>
<dbReference type="InterPro" id="IPR001623">
    <property type="entry name" value="DnaJ_domain"/>
</dbReference>
<dbReference type="InterPro" id="IPR018253">
    <property type="entry name" value="DnaJ_domain_CS"/>
</dbReference>
<dbReference type="InterPro" id="IPR008971">
    <property type="entry name" value="HSP40/DnaJ_pept-bd"/>
</dbReference>
<dbReference type="InterPro" id="IPR001305">
    <property type="entry name" value="HSP_DnaJ_Cys-rich_dom"/>
</dbReference>
<dbReference type="InterPro" id="IPR036410">
    <property type="entry name" value="HSP_DnaJ_Cys-rich_dom_sf"/>
</dbReference>
<dbReference type="InterPro" id="IPR036869">
    <property type="entry name" value="J_dom_sf"/>
</dbReference>
<dbReference type="NCBIfam" id="TIGR02349">
    <property type="entry name" value="DnaJ_bact"/>
    <property type="match status" value="1"/>
</dbReference>
<dbReference type="NCBIfam" id="NF008035">
    <property type="entry name" value="PRK10767.1"/>
    <property type="match status" value="1"/>
</dbReference>
<dbReference type="PANTHER" id="PTHR43096:SF48">
    <property type="entry name" value="CHAPERONE PROTEIN DNAJ"/>
    <property type="match status" value="1"/>
</dbReference>
<dbReference type="PANTHER" id="PTHR43096">
    <property type="entry name" value="DNAJ HOMOLOG 1, MITOCHONDRIAL-RELATED"/>
    <property type="match status" value="1"/>
</dbReference>
<dbReference type="Pfam" id="PF00226">
    <property type="entry name" value="DnaJ"/>
    <property type="match status" value="1"/>
</dbReference>
<dbReference type="Pfam" id="PF01556">
    <property type="entry name" value="DnaJ_C"/>
    <property type="match status" value="1"/>
</dbReference>
<dbReference type="Pfam" id="PF00684">
    <property type="entry name" value="DnaJ_CXXCXGXG"/>
    <property type="match status" value="1"/>
</dbReference>
<dbReference type="PRINTS" id="PR00625">
    <property type="entry name" value="JDOMAIN"/>
</dbReference>
<dbReference type="SMART" id="SM00271">
    <property type="entry name" value="DnaJ"/>
    <property type="match status" value="1"/>
</dbReference>
<dbReference type="SUPFAM" id="SSF46565">
    <property type="entry name" value="Chaperone J-domain"/>
    <property type="match status" value="1"/>
</dbReference>
<dbReference type="SUPFAM" id="SSF57938">
    <property type="entry name" value="DnaJ/Hsp40 cysteine-rich domain"/>
    <property type="match status" value="1"/>
</dbReference>
<dbReference type="SUPFAM" id="SSF49493">
    <property type="entry name" value="HSP40/DnaJ peptide-binding domain"/>
    <property type="match status" value="2"/>
</dbReference>
<dbReference type="PROSITE" id="PS00636">
    <property type="entry name" value="DNAJ_1"/>
    <property type="match status" value="1"/>
</dbReference>
<dbReference type="PROSITE" id="PS50076">
    <property type="entry name" value="DNAJ_2"/>
    <property type="match status" value="1"/>
</dbReference>
<dbReference type="PROSITE" id="PS51188">
    <property type="entry name" value="ZF_CR"/>
    <property type="match status" value="1"/>
</dbReference>
<feature type="chain" id="PRO_1000085181" description="Chaperone protein DnaJ">
    <location>
        <begin position="1"/>
        <end position="375"/>
    </location>
</feature>
<feature type="domain" description="J" evidence="1">
    <location>
        <begin position="5"/>
        <end position="70"/>
    </location>
</feature>
<feature type="repeat" description="CXXCXGXG motif">
    <location>
        <begin position="146"/>
        <end position="153"/>
    </location>
</feature>
<feature type="repeat" description="CXXCXGXG motif">
    <location>
        <begin position="163"/>
        <end position="170"/>
    </location>
</feature>
<feature type="repeat" description="CXXCXGXG motif">
    <location>
        <begin position="185"/>
        <end position="192"/>
    </location>
</feature>
<feature type="repeat" description="CXXCXGXG motif">
    <location>
        <begin position="199"/>
        <end position="206"/>
    </location>
</feature>
<feature type="zinc finger region" description="CR-type" evidence="1">
    <location>
        <begin position="133"/>
        <end position="211"/>
    </location>
</feature>
<feature type="binding site" evidence="1">
    <location>
        <position position="146"/>
    </location>
    <ligand>
        <name>Zn(2+)</name>
        <dbReference type="ChEBI" id="CHEBI:29105"/>
        <label>1</label>
    </ligand>
</feature>
<feature type="binding site" evidence="1">
    <location>
        <position position="149"/>
    </location>
    <ligand>
        <name>Zn(2+)</name>
        <dbReference type="ChEBI" id="CHEBI:29105"/>
        <label>1</label>
    </ligand>
</feature>
<feature type="binding site" evidence="1">
    <location>
        <position position="163"/>
    </location>
    <ligand>
        <name>Zn(2+)</name>
        <dbReference type="ChEBI" id="CHEBI:29105"/>
        <label>2</label>
    </ligand>
</feature>
<feature type="binding site" evidence="1">
    <location>
        <position position="166"/>
    </location>
    <ligand>
        <name>Zn(2+)</name>
        <dbReference type="ChEBI" id="CHEBI:29105"/>
        <label>2</label>
    </ligand>
</feature>
<feature type="binding site" evidence="1">
    <location>
        <position position="185"/>
    </location>
    <ligand>
        <name>Zn(2+)</name>
        <dbReference type="ChEBI" id="CHEBI:29105"/>
        <label>2</label>
    </ligand>
</feature>
<feature type="binding site" evidence="1">
    <location>
        <position position="188"/>
    </location>
    <ligand>
        <name>Zn(2+)</name>
        <dbReference type="ChEBI" id="CHEBI:29105"/>
        <label>2</label>
    </ligand>
</feature>
<feature type="binding site" evidence="1">
    <location>
        <position position="199"/>
    </location>
    <ligand>
        <name>Zn(2+)</name>
        <dbReference type="ChEBI" id="CHEBI:29105"/>
        <label>1</label>
    </ligand>
</feature>
<feature type="binding site" evidence="1">
    <location>
        <position position="202"/>
    </location>
    <ligand>
        <name>Zn(2+)</name>
        <dbReference type="ChEBI" id="CHEBI:29105"/>
        <label>1</label>
    </ligand>
</feature>
<name>DNAJ_COXBN</name>
<gene>
    <name evidence="1" type="primary">dnaJ</name>
    <name type="ordered locus">CBUD_1377</name>
</gene>
<sequence length="375" mass="41085">MAKRDYYEVLGVNRNATEAEVKKAFRRLAMKYHPDRNPGDKDAEVKFKEAREAYEVLCDSRKRASYDQFGHAGVEQTFGGAGAGGFGFGDLGDIFDDIFGDIFGGARGGQAREQRGADLAYELVLSLEEAVHGLSRTIKVPTWINCKTCNGSGAKKGSSPATCPRCNGSGQMRMQHGFLQVQQTCSVCRGRGQVIKDPCTDCHGQGRQQQTKTLSVKIPPGIDTGDRIRLAGEGEAGLFGAPPGDLYVQVRVKPHPLFHREGNDLHSEVPIDFTTAALGGEMEIPTLDGSVRLTIPPETQGGKQFRLRGKGVKALRSGAVGDLICHIVVETPVKLSPEQKDYLKQFAELLKKDEKNHSPRTRNWFDSVKDFFTSK</sequence>
<accession>A9KG87</accession>
<keyword id="KW-0143">Chaperone</keyword>
<keyword id="KW-0963">Cytoplasm</keyword>
<keyword id="KW-0235">DNA replication</keyword>
<keyword id="KW-0479">Metal-binding</keyword>
<keyword id="KW-0677">Repeat</keyword>
<keyword id="KW-0346">Stress response</keyword>
<keyword id="KW-0862">Zinc</keyword>
<keyword id="KW-0863">Zinc-finger</keyword>
<comment type="function">
    <text evidence="1">Participates actively in the response to hyperosmotic and heat shock by preventing the aggregation of stress-denatured proteins and by disaggregating proteins, also in an autonomous, DnaK-independent fashion. Unfolded proteins bind initially to DnaJ; upon interaction with the DnaJ-bound protein, DnaK hydrolyzes its bound ATP, resulting in the formation of a stable complex. GrpE releases ADP from DnaK; ATP binding to DnaK triggers the release of the substrate protein, thus completing the reaction cycle. Several rounds of ATP-dependent interactions between DnaJ, DnaK and GrpE are required for fully efficient folding. Also involved, together with DnaK and GrpE, in the DNA replication of plasmids through activation of initiation proteins.</text>
</comment>
<comment type="cofactor">
    <cofactor evidence="1">
        <name>Zn(2+)</name>
        <dbReference type="ChEBI" id="CHEBI:29105"/>
    </cofactor>
    <text evidence="1">Binds 2 Zn(2+) ions per monomer.</text>
</comment>
<comment type="subunit">
    <text evidence="1">Homodimer.</text>
</comment>
<comment type="subcellular location">
    <subcellularLocation>
        <location evidence="1">Cytoplasm</location>
    </subcellularLocation>
</comment>
<comment type="domain">
    <text evidence="1">The J domain is necessary and sufficient to stimulate DnaK ATPase activity. Zinc center 1 plays an important role in the autonomous, DnaK-independent chaperone activity of DnaJ. Zinc center 2 is essential for interaction with DnaK and for DnaJ activity.</text>
</comment>
<comment type="similarity">
    <text evidence="1">Belongs to the DnaJ family.</text>
</comment>
<evidence type="ECO:0000255" key="1">
    <source>
        <dbReference type="HAMAP-Rule" id="MF_01152"/>
    </source>
</evidence>
<organism>
    <name type="scientific">Coxiella burnetii (strain Dugway 5J108-111)</name>
    <dbReference type="NCBI Taxonomy" id="434922"/>
    <lineage>
        <taxon>Bacteria</taxon>
        <taxon>Pseudomonadati</taxon>
        <taxon>Pseudomonadota</taxon>
        <taxon>Gammaproteobacteria</taxon>
        <taxon>Legionellales</taxon>
        <taxon>Coxiellaceae</taxon>
        <taxon>Coxiella</taxon>
    </lineage>
</organism>
<protein>
    <recommendedName>
        <fullName evidence="1">Chaperone protein DnaJ</fullName>
    </recommendedName>
</protein>
<reference key="1">
    <citation type="journal article" date="2009" name="Infect. Immun.">
        <title>Comparative genomics reveal extensive transposon-mediated genomic plasticity and diversity among potential effector proteins within the genus Coxiella.</title>
        <authorList>
            <person name="Beare P.A."/>
            <person name="Unsworth N."/>
            <person name="Andoh M."/>
            <person name="Voth D.E."/>
            <person name="Omsland A."/>
            <person name="Gilk S.D."/>
            <person name="Williams K.P."/>
            <person name="Sobral B.W."/>
            <person name="Kupko J.J. III"/>
            <person name="Porcella S.F."/>
            <person name="Samuel J.E."/>
            <person name="Heinzen R.A."/>
        </authorList>
    </citation>
    <scope>NUCLEOTIDE SEQUENCE [LARGE SCALE GENOMIC DNA]</scope>
    <source>
        <strain>Dugway 5J108-111</strain>
    </source>
</reference>